<reference key="1">
    <citation type="submission" date="2009-03" db="EMBL/GenBank/DDBJ databases">
        <title>Comparison of the complete genome sequences of Rhodococcus erythropolis PR4 and Rhodococcus opacus B4.</title>
        <authorList>
            <person name="Takarada H."/>
            <person name="Sekine M."/>
            <person name="Hosoyama A."/>
            <person name="Yamada R."/>
            <person name="Fujisawa T."/>
            <person name="Omata S."/>
            <person name="Shimizu A."/>
            <person name="Tsukatani N."/>
            <person name="Tanikawa S."/>
            <person name="Fujita N."/>
            <person name="Harayama S."/>
        </authorList>
    </citation>
    <scope>NUCLEOTIDE SEQUENCE [LARGE SCALE GENOMIC DNA]</scope>
    <source>
        <strain>B4</strain>
    </source>
</reference>
<protein>
    <recommendedName>
        <fullName evidence="1">Ribosome maturation factor RimP</fullName>
    </recommendedName>
</protein>
<dbReference type="EMBL" id="AP011115">
    <property type="protein sequence ID" value="BAH54927.1"/>
    <property type="molecule type" value="Genomic_DNA"/>
</dbReference>
<dbReference type="RefSeq" id="WP_015890365.1">
    <property type="nucleotide sequence ID" value="NC_012522.1"/>
</dbReference>
<dbReference type="SMR" id="C1B310"/>
<dbReference type="STRING" id="632772.ROP_66800"/>
<dbReference type="KEGG" id="rop:ROP_66800"/>
<dbReference type="PATRIC" id="fig|632772.20.peg.6966"/>
<dbReference type="HOGENOM" id="CLU_070525_3_0_11"/>
<dbReference type="OrthoDB" id="9805006at2"/>
<dbReference type="Proteomes" id="UP000002212">
    <property type="component" value="Chromosome"/>
</dbReference>
<dbReference type="GO" id="GO:0005829">
    <property type="term" value="C:cytosol"/>
    <property type="evidence" value="ECO:0007669"/>
    <property type="project" value="TreeGrafter"/>
</dbReference>
<dbReference type="GO" id="GO:0000028">
    <property type="term" value="P:ribosomal small subunit assembly"/>
    <property type="evidence" value="ECO:0007669"/>
    <property type="project" value="TreeGrafter"/>
</dbReference>
<dbReference type="GO" id="GO:0006412">
    <property type="term" value="P:translation"/>
    <property type="evidence" value="ECO:0007669"/>
    <property type="project" value="TreeGrafter"/>
</dbReference>
<dbReference type="CDD" id="cd01734">
    <property type="entry name" value="YlxS_C"/>
    <property type="match status" value="1"/>
</dbReference>
<dbReference type="Gene3D" id="3.30.300.70">
    <property type="entry name" value="RimP-like superfamily, N-terminal"/>
    <property type="match status" value="1"/>
</dbReference>
<dbReference type="HAMAP" id="MF_01077">
    <property type="entry name" value="RimP"/>
    <property type="match status" value="1"/>
</dbReference>
<dbReference type="InterPro" id="IPR003728">
    <property type="entry name" value="Ribosome_maturation_RimP"/>
</dbReference>
<dbReference type="InterPro" id="IPR028998">
    <property type="entry name" value="RimP_C"/>
</dbReference>
<dbReference type="InterPro" id="IPR036847">
    <property type="entry name" value="RimP_C_sf"/>
</dbReference>
<dbReference type="InterPro" id="IPR028989">
    <property type="entry name" value="RimP_N"/>
</dbReference>
<dbReference type="InterPro" id="IPR035956">
    <property type="entry name" value="RimP_N_sf"/>
</dbReference>
<dbReference type="NCBIfam" id="NF000930">
    <property type="entry name" value="PRK00092.2-2"/>
    <property type="match status" value="1"/>
</dbReference>
<dbReference type="PANTHER" id="PTHR33867">
    <property type="entry name" value="RIBOSOME MATURATION FACTOR RIMP"/>
    <property type="match status" value="1"/>
</dbReference>
<dbReference type="PANTHER" id="PTHR33867:SF1">
    <property type="entry name" value="RIBOSOME MATURATION FACTOR RIMP"/>
    <property type="match status" value="1"/>
</dbReference>
<dbReference type="Pfam" id="PF17384">
    <property type="entry name" value="DUF150_C"/>
    <property type="match status" value="1"/>
</dbReference>
<dbReference type="Pfam" id="PF02576">
    <property type="entry name" value="RimP_N"/>
    <property type="match status" value="1"/>
</dbReference>
<dbReference type="SUPFAM" id="SSF74942">
    <property type="entry name" value="YhbC-like, C-terminal domain"/>
    <property type="match status" value="1"/>
</dbReference>
<dbReference type="SUPFAM" id="SSF75420">
    <property type="entry name" value="YhbC-like, N-terminal domain"/>
    <property type="match status" value="1"/>
</dbReference>
<accession>C1B310</accession>
<keyword id="KW-0963">Cytoplasm</keyword>
<keyword id="KW-0690">Ribosome biogenesis</keyword>
<comment type="function">
    <text evidence="1">Required for maturation of 30S ribosomal subunits.</text>
</comment>
<comment type="subcellular location">
    <subcellularLocation>
        <location evidence="1">Cytoplasm</location>
    </subcellularLocation>
</comment>
<comment type="similarity">
    <text evidence="1">Belongs to the RimP family.</text>
</comment>
<name>RIMP_RHOOB</name>
<sequence length="190" mass="20525">MPVPSKERVTELISDLVQRQGYDVEDVAVTLAGKHSAVRIMVDSDAGLELDAVANLSHEISEVFDSVSDFGESPYTLEVTSPGIDRPLTHERHWRRARGRKARIDLAHETVVGRIGALDGDSVAVVIGSRTGPDVRRIALADIQKAVVQVEFSKPDPRELELAGGIPEGRVAPADADASEDEEVVEGLDK</sequence>
<evidence type="ECO:0000255" key="1">
    <source>
        <dbReference type="HAMAP-Rule" id="MF_01077"/>
    </source>
</evidence>
<evidence type="ECO:0000256" key="2">
    <source>
        <dbReference type="SAM" id="MobiDB-lite"/>
    </source>
</evidence>
<organism>
    <name type="scientific">Rhodococcus opacus (strain B4)</name>
    <dbReference type="NCBI Taxonomy" id="632772"/>
    <lineage>
        <taxon>Bacteria</taxon>
        <taxon>Bacillati</taxon>
        <taxon>Actinomycetota</taxon>
        <taxon>Actinomycetes</taxon>
        <taxon>Mycobacteriales</taxon>
        <taxon>Nocardiaceae</taxon>
        <taxon>Rhodococcus</taxon>
    </lineage>
</organism>
<feature type="chain" id="PRO_1000149802" description="Ribosome maturation factor RimP">
    <location>
        <begin position="1"/>
        <end position="190"/>
    </location>
</feature>
<feature type="region of interest" description="Disordered" evidence="2">
    <location>
        <begin position="159"/>
        <end position="190"/>
    </location>
</feature>
<feature type="compositionally biased region" description="Acidic residues" evidence="2">
    <location>
        <begin position="177"/>
        <end position="190"/>
    </location>
</feature>
<gene>
    <name evidence="1" type="primary">rimP</name>
    <name type="ordered locus">ROP_66800</name>
</gene>
<proteinExistence type="inferred from homology"/>